<gene>
    <name type="primary">CBR1</name>
    <name type="ordered locus">DEHA2C07238g</name>
</gene>
<protein>
    <recommendedName>
        <fullName>NADH-cytochrome b5 reductase 1</fullName>
        <ecNumber evidence="2">1.6.2.2</ecNumber>
    </recommendedName>
    <alternativeName>
        <fullName>Microsomal cytochrome b reductase</fullName>
    </alternativeName>
</protein>
<keyword id="KW-0274">FAD</keyword>
<keyword id="KW-0285">Flavoprotein</keyword>
<keyword id="KW-0472">Membrane</keyword>
<keyword id="KW-0496">Mitochondrion</keyword>
<keyword id="KW-1000">Mitochondrion outer membrane</keyword>
<keyword id="KW-0520">NAD</keyword>
<keyword id="KW-0560">Oxidoreductase</keyword>
<keyword id="KW-1185">Reference proteome</keyword>
<keyword id="KW-0808">Transferase</keyword>
<keyword id="KW-0812">Transmembrane</keyword>
<keyword id="KW-1133">Transmembrane helix</keyword>
<evidence type="ECO:0000250" key="1"/>
<evidence type="ECO:0000250" key="2">
    <source>
        <dbReference type="UniProtKB" id="P38626"/>
    </source>
</evidence>
<evidence type="ECO:0000255" key="3"/>
<evidence type="ECO:0000255" key="4">
    <source>
        <dbReference type="PROSITE-ProRule" id="PRU00716"/>
    </source>
</evidence>
<evidence type="ECO:0000305" key="5"/>
<organism>
    <name type="scientific">Debaryomyces hansenii (strain ATCC 36239 / CBS 767 / BCRC 21394 / JCM 1990 / NBRC 0083 / IGC 2968)</name>
    <name type="common">Yeast</name>
    <name type="synonym">Torulaspora hansenii</name>
    <dbReference type="NCBI Taxonomy" id="284592"/>
    <lineage>
        <taxon>Eukaryota</taxon>
        <taxon>Fungi</taxon>
        <taxon>Dikarya</taxon>
        <taxon>Ascomycota</taxon>
        <taxon>Saccharomycotina</taxon>
        <taxon>Pichiomycetes</taxon>
        <taxon>Debaryomycetaceae</taxon>
        <taxon>Debaryomyces</taxon>
    </lineage>
</organism>
<proteinExistence type="inferred from homology"/>
<reference key="1">
    <citation type="journal article" date="2004" name="Nature">
        <title>Genome evolution in yeasts.</title>
        <authorList>
            <person name="Dujon B."/>
            <person name="Sherman D."/>
            <person name="Fischer G."/>
            <person name="Durrens P."/>
            <person name="Casaregola S."/>
            <person name="Lafontaine I."/>
            <person name="de Montigny J."/>
            <person name="Marck C."/>
            <person name="Neuveglise C."/>
            <person name="Talla E."/>
            <person name="Goffard N."/>
            <person name="Frangeul L."/>
            <person name="Aigle M."/>
            <person name="Anthouard V."/>
            <person name="Babour A."/>
            <person name="Barbe V."/>
            <person name="Barnay S."/>
            <person name="Blanchin S."/>
            <person name="Beckerich J.-M."/>
            <person name="Beyne E."/>
            <person name="Bleykasten C."/>
            <person name="Boisrame A."/>
            <person name="Boyer J."/>
            <person name="Cattolico L."/>
            <person name="Confanioleri F."/>
            <person name="de Daruvar A."/>
            <person name="Despons L."/>
            <person name="Fabre E."/>
            <person name="Fairhead C."/>
            <person name="Ferry-Dumazet H."/>
            <person name="Groppi A."/>
            <person name="Hantraye F."/>
            <person name="Hennequin C."/>
            <person name="Jauniaux N."/>
            <person name="Joyet P."/>
            <person name="Kachouri R."/>
            <person name="Kerrest A."/>
            <person name="Koszul R."/>
            <person name="Lemaire M."/>
            <person name="Lesur I."/>
            <person name="Ma L."/>
            <person name="Muller H."/>
            <person name="Nicaud J.-M."/>
            <person name="Nikolski M."/>
            <person name="Oztas S."/>
            <person name="Ozier-Kalogeropoulos O."/>
            <person name="Pellenz S."/>
            <person name="Potier S."/>
            <person name="Richard G.-F."/>
            <person name="Straub M.-L."/>
            <person name="Suleau A."/>
            <person name="Swennen D."/>
            <person name="Tekaia F."/>
            <person name="Wesolowski-Louvel M."/>
            <person name="Westhof E."/>
            <person name="Wirth B."/>
            <person name="Zeniou-Meyer M."/>
            <person name="Zivanovic Y."/>
            <person name="Bolotin-Fukuhara M."/>
            <person name="Thierry A."/>
            <person name="Bouchier C."/>
            <person name="Caudron B."/>
            <person name="Scarpelli C."/>
            <person name="Gaillardin C."/>
            <person name="Weissenbach J."/>
            <person name="Wincker P."/>
            <person name="Souciet J.-L."/>
        </authorList>
    </citation>
    <scope>NUCLEOTIDE SEQUENCE [LARGE SCALE GENOMIC DNA]</scope>
    <source>
        <strain>ATCC 36239 / CBS 767 / BCRC 21394 / JCM 1990 / NBRC 0083 / IGC 2968</strain>
    </source>
</reference>
<dbReference type="EC" id="1.6.2.2" evidence="2"/>
<dbReference type="EMBL" id="CR382135">
    <property type="protein sequence ID" value="CAG86055.1"/>
    <property type="molecule type" value="Genomic_DNA"/>
</dbReference>
<dbReference type="RefSeq" id="XP_457997.1">
    <property type="nucleotide sequence ID" value="XM_457997.1"/>
</dbReference>
<dbReference type="SMR" id="Q6BUX2"/>
<dbReference type="FunCoup" id="Q6BUX2">
    <property type="interactions" value="287"/>
</dbReference>
<dbReference type="STRING" id="284592.Q6BUX2"/>
<dbReference type="GeneID" id="2900415"/>
<dbReference type="KEGG" id="dha:DEHA2C07238g"/>
<dbReference type="VEuPathDB" id="FungiDB:DEHA2C07238g"/>
<dbReference type="eggNOG" id="KOG0534">
    <property type="taxonomic scope" value="Eukaryota"/>
</dbReference>
<dbReference type="HOGENOM" id="CLU_003827_9_0_1"/>
<dbReference type="InParanoid" id="Q6BUX2"/>
<dbReference type="OMA" id="VQIFMCG"/>
<dbReference type="OrthoDB" id="432685at2759"/>
<dbReference type="UniPathway" id="UPA00559"/>
<dbReference type="Proteomes" id="UP000000599">
    <property type="component" value="Chromosome C"/>
</dbReference>
<dbReference type="GO" id="GO:0005783">
    <property type="term" value="C:endoplasmic reticulum"/>
    <property type="evidence" value="ECO:0007669"/>
    <property type="project" value="TreeGrafter"/>
</dbReference>
<dbReference type="GO" id="GO:0005741">
    <property type="term" value="C:mitochondrial outer membrane"/>
    <property type="evidence" value="ECO:0007669"/>
    <property type="project" value="UniProtKB-SubCell"/>
</dbReference>
<dbReference type="GO" id="GO:0005886">
    <property type="term" value="C:plasma membrane"/>
    <property type="evidence" value="ECO:0007669"/>
    <property type="project" value="TreeGrafter"/>
</dbReference>
<dbReference type="GO" id="GO:0090560">
    <property type="term" value="F:2-(3-amino-3-carboxypropyl)histidine synthase activity"/>
    <property type="evidence" value="ECO:0007669"/>
    <property type="project" value="EnsemblFungi"/>
</dbReference>
<dbReference type="GO" id="GO:0004128">
    <property type="term" value="F:cytochrome-b5 reductase activity, acting on NAD(P)H"/>
    <property type="evidence" value="ECO:0000250"/>
    <property type="project" value="UniProtKB"/>
</dbReference>
<dbReference type="GO" id="GO:0003954">
    <property type="term" value="F:NADH dehydrogenase activity"/>
    <property type="evidence" value="ECO:0000250"/>
    <property type="project" value="UniProtKB"/>
</dbReference>
<dbReference type="GO" id="GO:0017183">
    <property type="term" value="P:protein histidyl modification to diphthamide"/>
    <property type="evidence" value="ECO:0000250"/>
    <property type="project" value="UniProtKB"/>
</dbReference>
<dbReference type="GO" id="GO:0002926">
    <property type="term" value="P:tRNA wobble base 5-methoxycarbonylmethyl-2-thiouridinylation"/>
    <property type="evidence" value="ECO:0000250"/>
    <property type="project" value="UniProtKB"/>
</dbReference>
<dbReference type="CDD" id="cd06183">
    <property type="entry name" value="cyt_b5_reduct_like"/>
    <property type="match status" value="1"/>
</dbReference>
<dbReference type="FunFam" id="2.40.30.10:FF:000032">
    <property type="entry name" value="NADH-cytochrome b5 reductase"/>
    <property type="match status" value="1"/>
</dbReference>
<dbReference type="FunFam" id="3.40.50.80:FF:000019">
    <property type="entry name" value="NADH-cytochrome b5 reductase"/>
    <property type="match status" value="1"/>
</dbReference>
<dbReference type="Gene3D" id="3.40.50.80">
    <property type="entry name" value="Nucleotide-binding domain of ferredoxin-NADP reductase (FNR) module"/>
    <property type="match status" value="1"/>
</dbReference>
<dbReference type="Gene3D" id="2.40.30.10">
    <property type="entry name" value="Translation factors"/>
    <property type="match status" value="1"/>
</dbReference>
<dbReference type="InterPro" id="IPR001834">
    <property type="entry name" value="CBR-like"/>
</dbReference>
<dbReference type="InterPro" id="IPR008333">
    <property type="entry name" value="Cbr1-like_FAD-bd_dom"/>
</dbReference>
<dbReference type="InterPro" id="IPR017927">
    <property type="entry name" value="FAD-bd_FR_type"/>
</dbReference>
<dbReference type="InterPro" id="IPR001709">
    <property type="entry name" value="Flavoprot_Pyr_Nucl_cyt_Rdtase"/>
</dbReference>
<dbReference type="InterPro" id="IPR039261">
    <property type="entry name" value="FNR_nucleotide-bd"/>
</dbReference>
<dbReference type="InterPro" id="IPR001433">
    <property type="entry name" value="OxRdtase_FAD/NAD-bd"/>
</dbReference>
<dbReference type="InterPro" id="IPR017938">
    <property type="entry name" value="Riboflavin_synthase-like_b-brl"/>
</dbReference>
<dbReference type="PANTHER" id="PTHR19370">
    <property type="entry name" value="NADH-CYTOCHROME B5 REDUCTASE"/>
    <property type="match status" value="1"/>
</dbReference>
<dbReference type="PANTHER" id="PTHR19370:SF184">
    <property type="entry name" value="NADH-CYTOCHROME B5 REDUCTASE-LIKE"/>
    <property type="match status" value="1"/>
</dbReference>
<dbReference type="Pfam" id="PF00970">
    <property type="entry name" value="FAD_binding_6"/>
    <property type="match status" value="1"/>
</dbReference>
<dbReference type="Pfam" id="PF00175">
    <property type="entry name" value="NAD_binding_1"/>
    <property type="match status" value="1"/>
</dbReference>
<dbReference type="PRINTS" id="PR00406">
    <property type="entry name" value="CYTB5RDTASE"/>
</dbReference>
<dbReference type="PRINTS" id="PR00371">
    <property type="entry name" value="FPNCR"/>
</dbReference>
<dbReference type="SUPFAM" id="SSF52343">
    <property type="entry name" value="Ferredoxin reductase-like, C-terminal NADP-linked domain"/>
    <property type="match status" value="1"/>
</dbReference>
<dbReference type="SUPFAM" id="SSF63380">
    <property type="entry name" value="Riboflavin synthase domain-like"/>
    <property type="match status" value="1"/>
</dbReference>
<dbReference type="PROSITE" id="PS51384">
    <property type="entry name" value="FAD_FR"/>
    <property type="match status" value="1"/>
</dbReference>
<feature type="chain" id="PRO_0000330152" description="NADH-cytochrome b5 reductase 1">
    <location>
        <begin position="1"/>
        <end position="284"/>
    </location>
</feature>
<feature type="transmembrane region" description="Helical" evidence="3">
    <location>
        <begin position="8"/>
        <end position="28"/>
    </location>
</feature>
<feature type="domain" description="FAD-binding FR-type" evidence="4">
    <location>
        <begin position="41"/>
        <end position="144"/>
    </location>
</feature>
<feature type="binding site" evidence="1">
    <location>
        <begin position="124"/>
        <end position="139"/>
    </location>
    <ligand>
        <name>FAD</name>
        <dbReference type="ChEBI" id="CHEBI:57692"/>
    </ligand>
</feature>
<feature type="binding site" evidence="1">
    <location>
        <begin position="150"/>
        <end position="182"/>
    </location>
    <ligand>
        <name>FAD</name>
        <dbReference type="ChEBI" id="CHEBI:57692"/>
    </ligand>
</feature>
<name>NCB5R_DEBHA</name>
<sequence>MSQPEPNPFIIFATVAAIISSAVAYYFFQLSRKNAPVLKPNDFQKFPLIEKTRVSHNTCVYRFGLPRSTDRLGLPIGQHIAIGATINDKEVVRSYTPISTDDELGYFDLLIKAYENGNISRHVESKKIGETIDIRGPKGFFTYTPGMVESFGMIAGGTGITPMYQILTAILRNPEDKTKVSLVYANVTEDDILLKEELNKMAREHPDRFKIYYVLNTPPENWTGGVGFVTPEIMDKHLPKASEATNLLLCGPPPMISAMKKAAVGLGYQKAKPVSKLGDQIFVF</sequence>
<comment type="function">
    <text evidence="2">NADH-dependent reductase for DPH3 and cytochrome b5. Required for the first step of diphthamide biosynthesis, a post-translational modification of histidine which occurs in elongation factor 2. DPH1 and DPH2 transfer a 3-amino-3-carboxypropyl (ACP) group from S-adenosyl-L-methionine (SAM) to a histidine residue, the reaction is assisted by a reduction system comprising DPH3 and a NADH-dependent reductase, predominantly CBR1. By reducing DPH3, also involved in the formation of the tRNA wobble base modification mcm5s 2U (5-methoxycarbonylmethyl-2-thiouridine), mediated by the elongator complex. The cytochrome b5/NADH cytochrome b5 reductase electron transfer system supports the catalytic activity of several sterol biosynthetic enzymes.</text>
</comment>
<comment type="catalytic activity">
    <reaction evidence="2">
        <text>2 Fe(III)-[cytochrome b5] + NADH = 2 Fe(II)-[cytochrome b5] + NAD(+) + H(+)</text>
        <dbReference type="Rhea" id="RHEA:46680"/>
        <dbReference type="Rhea" id="RHEA-COMP:10438"/>
        <dbReference type="Rhea" id="RHEA-COMP:10439"/>
        <dbReference type="ChEBI" id="CHEBI:15378"/>
        <dbReference type="ChEBI" id="CHEBI:29033"/>
        <dbReference type="ChEBI" id="CHEBI:29034"/>
        <dbReference type="ChEBI" id="CHEBI:57540"/>
        <dbReference type="ChEBI" id="CHEBI:57945"/>
        <dbReference type="EC" id="1.6.2.2"/>
    </reaction>
</comment>
<comment type="catalytic activity">
    <reaction evidence="2">
        <text>2 Fe(3+)-[Dph3] + NADH = 2 Fe(2+)-[Dph3] + NAD(+) + H(+)</text>
        <dbReference type="Rhea" id="RHEA:71231"/>
        <dbReference type="Rhea" id="RHEA-COMP:18002"/>
        <dbReference type="Rhea" id="RHEA-COMP:18003"/>
        <dbReference type="ChEBI" id="CHEBI:15378"/>
        <dbReference type="ChEBI" id="CHEBI:29033"/>
        <dbReference type="ChEBI" id="CHEBI:29034"/>
        <dbReference type="ChEBI" id="CHEBI:57540"/>
        <dbReference type="ChEBI" id="CHEBI:57945"/>
        <dbReference type="ChEBI" id="CHEBI:83228"/>
    </reaction>
    <physiologicalReaction direction="left-to-right" evidence="2">
        <dbReference type="Rhea" id="RHEA:71232"/>
    </physiologicalReaction>
</comment>
<comment type="cofactor">
    <cofactor evidence="3">
        <name>FAD</name>
        <dbReference type="ChEBI" id="CHEBI:57692"/>
    </cofactor>
</comment>
<comment type="pathway">
    <text evidence="2">Protein modification; peptidyl-diphthamide biosynthesis.</text>
</comment>
<comment type="subunit">
    <text evidence="2">Monomer. Component of the 2-(3-amino-3-carboxypropyl)histidine synthase complex composed of DPH1, DPH2, DPH3 and a NADH-dependent reductase, predominantly CBR1.</text>
</comment>
<comment type="subcellular location">
    <subcellularLocation>
        <location evidence="2">Mitochondrion outer membrane</location>
        <topology evidence="3">Single-pass membrane protein</topology>
    </subcellularLocation>
</comment>
<comment type="similarity">
    <text evidence="5">Belongs to the flavoprotein pyridine nucleotide cytochrome reductase family.</text>
</comment>
<accession>Q6BUX2</accession>